<comment type="subcellular location">
    <subcellularLocation>
        <location evidence="2">Secreted</location>
    </subcellularLocation>
</comment>
<comment type="tissue specificity">
    <text evidence="5">Expressed by the venom gland.</text>
</comment>
<comment type="mass spectrometry" mass="1852.79" error="0.2" method="MALDI" evidence="2"/>
<comment type="similarity">
    <text evidence="4">Belongs to the poneritoxin-Ae1 family.</text>
</comment>
<organism>
    <name type="scientific">Anochetus emarginatus</name>
    <name type="common">Ant</name>
    <name type="synonym">Stenomyrmex emarginatus</name>
    <dbReference type="NCBI Taxonomy" id="486636"/>
    <lineage>
        <taxon>Eukaryota</taxon>
        <taxon>Metazoa</taxon>
        <taxon>Ecdysozoa</taxon>
        <taxon>Arthropoda</taxon>
        <taxon>Hexapoda</taxon>
        <taxon>Insecta</taxon>
        <taxon>Pterygota</taxon>
        <taxon>Neoptera</taxon>
        <taxon>Endopterygota</taxon>
        <taxon>Hymenoptera</taxon>
        <taxon>Apocrita</taxon>
        <taxon>Aculeata</taxon>
        <taxon>Formicoidea</taxon>
        <taxon>Formicidae</taxon>
        <taxon>Ponerinae</taxon>
        <taxon>Ponerini</taxon>
        <taxon>Anochetus</taxon>
    </lineage>
</organism>
<protein>
    <recommendedName>
        <fullName evidence="3">U1-poneritoxin-Ae1c</fullName>
        <shortName evidence="3">U1-PONTX-Ae1c</shortName>
    </recommendedName>
    <alternativeName>
        <fullName evidence="4">Poneratoxin</fullName>
    </alternativeName>
</protein>
<accession>C0HJY6</accession>
<proteinExistence type="evidence at protein level"/>
<feature type="peptide" id="PRO_0000437875" description="U1-poneritoxin-Ae1c" evidence="2">
    <location>
        <begin position="1"/>
        <end position="18"/>
    </location>
</feature>
<feature type="modified residue" description="Cysteine amide" evidence="2">
    <location>
        <position position="18"/>
    </location>
</feature>
<feature type="disulfide bond" evidence="1">
    <location>
        <begin position="4"/>
        <end position="16"/>
    </location>
</feature>
<feature type="disulfide bond" evidence="1">
    <location>
        <begin position="8"/>
        <end position="18"/>
    </location>
</feature>
<evidence type="ECO:0000250" key="1">
    <source>
        <dbReference type="UniProtKB" id="C0HJY4"/>
    </source>
</evidence>
<evidence type="ECO:0000269" key="2">
    <source>
    </source>
</evidence>
<evidence type="ECO:0000303" key="3">
    <source>
    </source>
</evidence>
<evidence type="ECO:0000305" key="4"/>
<evidence type="ECO:0000305" key="5">
    <source>
    </source>
</evidence>
<keyword id="KW-0027">Amidation</keyword>
<keyword id="KW-0903">Direct protein sequencing</keyword>
<keyword id="KW-1015">Disulfide bond</keyword>
<keyword id="KW-0964">Secreted</keyword>
<keyword id="KW-0800">Toxin</keyword>
<name>PON1C_ANOEM</name>
<sequence length="18" mass="1858">RSVCSNGCRPKPFGGCSC</sequence>
<dbReference type="GO" id="GO:0005576">
    <property type="term" value="C:extracellular region"/>
    <property type="evidence" value="ECO:0007669"/>
    <property type="project" value="UniProtKB-SubCell"/>
</dbReference>
<dbReference type="GO" id="GO:0090729">
    <property type="term" value="F:toxin activity"/>
    <property type="evidence" value="ECO:0007669"/>
    <property type="project" value="UniProtKB-KW"/>
</dbReference>
<reference key="1">
    <citation type="journal article" date="2016" name="Biochim. Biophys. Acta">
        <title>Isolation and characterization of a structurally unique beta-hairpin venom peptide from the predatory ant Anochetus emarginatus.</title>
        <authorList>
            <person name="Touchard A."/>
            <person name="Brust A."/>
            <person name="Cardoso F."/>
            <person name="Chin Y.-K."/>
            <person name="Herzig V."/>
            <person name="Jin A.-H."/>
            <person name="Dejean A."/>
            <person name="Alewood P."/>
            <person name="King G."/>
            <person name="Orivel J."/>
            <person name="Escoubas P."/>
        </authorList>
    </citation>
    <scope>PROTEIN SEQUENCE</scope>
    <scope>SUBCELLULAR LOCATION</scope>
    <scope>MASS SPECTROMETRY</scope>
    <scope>AMIDATION AT CYS-18</scope>
    <scope>IDENTIFICATION BY MASS SPECTROMETRY</scope>
    <source>
        <tissue>Venom</tissue>
    </source>
</reference>